<gene>
    <name evidence="1" type="primary">rpsC</name>
    <name type="ordered locus">CFPG_088</name>
</gene>
<feature type="chain" id="PRO_1000140921" description="Small ribosomal subunit protein uS3">
    <location>
        <begin position="1"/>
        <end position="245"/>
    </location>
</feature>
<feature type="domain" description="KH type-2" evidence="1">
    <location>
        <begin position="38"/>
        <end position="106"/>
    </location>
</feature>
<feature type="region of interest" description="Disordered" evidence="2">
    <location>
        <begin position="225"/>
        <end position="245"/>
    </location>
</feature>
<feature type="compositionally biased region" description="Basic residues" evidence="2">
    <location>
        <begin position="233"/>
        <end position="245"/>
    </location>
</feature>
<accession>B6YQ79</accession>
<reference key="1">
    <citation type="journal article" date="2008" name="Science">
        <title>Genome of an endosymbiont coupling N2 fixation to cellulolysis within RT protist cells in termite gut.</title>
        <authorList>
            <person name="Hongoh Y."/>
            <person name="Sharma V.K."/>
            <person name="Prakash T."/>
            <person name="Noda S."/>
            <person name="Toh H."/>
            <person name="Taylor T.D."/>
            <person name="Kudo T."/>
            <person name="Sakaki Y."/>
            <person name="Toyoda A."/>
            <person name="Hattori M."/>
            <person name="Ohkuma M."/>
        </authorList>
    </citation>
    <scope>NUCLEOTIDE SEQUENCE [LARGE SCALE GENOMIC DNA]</scope>
</reference>
<organism>
    <name type="scientific">Azobacteroides pseudotrichonymphae genomovar. CFP2</name>
    <dbReference type="NCBI Taxonomy" id="511995"/>
    <lineage>
        <taxon>Bacteria</taxon>
        <taxon>Pseudomonadati</taxon>
        <taxon>Bacteroidota</taxon>
        <taxon>Bacteroidia</taxon>
        <taxon>Bacteroidales</taxon>
        <taxon>Candidatus Azobacteroides</taxon>
    </lineage>
</organism>
<name>RS3_AZOPC</name>
<comment type="function">
    <text evidence="1">Binds the lower part of the 30S subunit head. Binds mRNA in the 70S ribosome, positioning it for translation.</text>
</comment>
<comment type="subunit">
    <text evidence="1">Part of the 30S ribosomal subunit. Forms a tight complex with proteins S10 and S14.</text>
</comment>
<comment type="similarity">
    <text evidence="1">Belongs to the universal ribosomal protein uS3 family.</text>
</comment>
<keyword id="KW-1185">Reference proteome</keyword>
<keyword id="KW-0687">Ribonucleoprotein</keyword>
<keyword id="KW-0689">Ribosomal protein</keyword>
<keyword id="KW-0694">RNA-binding</keyword>
<keyword id="KW-0699">rRNA-binding</keyword>
<proteinExistence type="inferred from homology"/>
<evidence type="ECO:0000255" key="1">
    <source>
        <dbReference type="HAMAP-Rule" id="MF_01309"/>
    </source>
</evidence>
<evidence type="ECO:0000256" key="2">
    <source>
        <dbReference type="SAM" id="MobiDB-lite"/>
    </source>
</evidence>
<evidence type="ECO:0000305" key="3"/>
<protein>
    <recommendedName>
        <fullName evidence="1">Small ribosomal subunit protein uS3</fullName>
    </recommendedName>
    <alternativeName>
        <fullName evidence="3">30S ribosomal protein S3</fullName>
    </alternativeName>
</protein>
<dbReference type="EMBL" id="AP010656">
    <property type="protein sequence ID" value="BAG83351.1"/>
    <property type="molecule type" value="Genomic_DNA"/>
</dbReference>
<dbReference type="RefSeq" id="WP_012573112.1">
    <property type="nucleotide sequence ID" value="NC_011565.1"/>
</dbReference>
<dbReference type="SMR" id="B6YQ79"/>
<dbReference type="STRING" id="511995.CFPG_088"/>
<dbReference type="KEGG" id="aps:CFPG_088"/>
<dbReference type="eggNOG" id="COG0092">
    <property type="taxonomic scope" value="Bacteria"/>
</dbReference>
<dbReference type="HOGENOM" id="CLU_058591_0_2_10"/>
<dbReference type="OrthoDB" id="9806396at2"/>
<dbReference type="Proteomes" id="UP000000723">
    <property type="component" value="Chromosome"/>
</dbReference>
<dbReference type="GO" id="GO:0022627">
    <property type="term" value="C:cytosolic small ribosomal subunit"/>
    <property type="evidence" value="ECO:0007669"/>
    <property type="project" value="TreeGrafter"/>
</dbReference>
<dbReference type="GO" id="GO:0003729">
    <property type="term" value="F:mRNA binding"/>
    <property type="evidence" value="ECO:0007669"/>
    <property type="project" value="UniProtKB-UniRule"/>
</dbReference>
<dbReference type="GO" id="GO:0019843">
    <property type="term" value="F:rRNA binding"/>
    <property type="evidence" value="ECO:0007669"/>
    <property type="project" value="UniProtKB-UniRule"/>
</dbReference>
<dbReference type="GO" id="GO:0003735">
    <property type="term" value="F:structural constituent of ribosome"/>
    <property type="evidence" value="ECO:0007669"/>
    <property type="project" value="InterPro"/>
</dbReference>
<dbReference type="GO" id="GO:0006412">
    <property type="term" value="P:translation"/>
    <property type="evidence" value="ECO:0007669"/>
    <property type="project" value="UniProtKB-UniRule"/>
</dbReference>
<dbReference type="CDD" id="cd02412">
    <property type="entry name" value="KH-II_30S_S3"/>
    <property type="match status" value="1"/>
</dbReference>
<dbReference type="FunFam" id="3.30.300.20:FF:000001">
    <property type="entry name" value="30S ribosomal protein S3"/>
    <property type="match status" value="1"/>
</dbReference>
<dbReference type="Gene3D" id="3.30.300.20">
    <property type="match status" value="1"/>
</dbReference>
<dbReference type="Gene3D" id="3.30.1140.32">
    <property type="entry name" value="Ribosomal protein S3, C-terminal domain"/>
    <property type="match status" value="1"/>
</dbReference>
<dbReference type="HAMAP" id="MF_01309_B">
    <property type="entry name" value="Ribosomal_uS3_B"/>
    <property type="match status" value="1"/>
</dbReference>
<dbReference type="InterPro" id="IPR004087">
    <property type="entry name" value="KH_dom"/>
</dbReference>
<dbReference type="InterPro" id="IPR015946">
    <property type="entry name" value="KH_dom-like_a/b"/>
</dbReference>
<dbReference type="InterPro" id="IPR004044">
    <property type="entry name" value="KH_dom_type_2"/>
</dbReference>
<dbReference type="InterPro" id="IPR009019">
    <property type="entry name" value="KH_sf_prok-type"/>
</dbReference>
<dbReference type="InterPro" id="IPR036419">
    <property type="entry name" value="Ribosomal_S3_C_sf"/>
</dbReference>
<dbReference type="InterPro" id="IPR005704">
    <property type="entry name" value="Ribosomal_uS3_bac-typ"/>
</dbReference>
<dbReference type="InterPro" id="IPR001351">
    <property type="entry name" value="Ribosomal_uS3_C"/>
</dbReference>
<dbReference type="InterPro" id="IPR018280">
    <property type="entry name" value="Ribosomal_uS3_CS"/>
</dbReference>
<dbReference type="NCBIfam" id="TIGR01009">
    <property type="entry name" value="rpsC_bact"/>
    <property type="match status" value="1"/>
</dbReference>
<dbReference type="PANTHER" id="PTHR11760">
    <property type="entry name" value="30S/40S RIBOSOMAL PROTEIN S3"/>
    <property type="match status" value="1"/>
</dbReference>
<dbReference type="PANTHER" id="PTHR11760:SF19">
    <property type="entry name" value="SMALL RIBOSOMAL SUBUNIT PROTEIN US3C"/>
    <property type="match status" value="1"/>
</dbReference>
<dbReference type="Pfam" id="PF07650">
    <property type="entry name" value="KH_2"/>
    <property type="match status" value="1"/>
</dbReference>
<dbReference type="Pfam" id="PF00189">
    <property type="entry name" value="Ribosomal_S3_C"/>
    <property type="match status" value="1"/>
</dbReference>
<dbReference type="SMART" id="SM00322">
    <property type="entry name" value="KH"/>
    <property type="match status" value="1"/>
</dbReference>
<dbReference type="SUPFAM" id="SSF54814">
    <property type="entry name" value="Prokaryotic type KH domain (KH-domain type II)"/>
    <property type="match status" value="1"/>
</dbReference>
<dbReference type="SUPFAM" id="SSF54821">
    <property type="entry name" value="Ribosomal protein S3 C-terminal domain"/>
    <property type="match status" value="1"/>
</dbReference>
<dbReference type="PROSITE" id="PS50823">
    <property type="entry name" value="KH_TYPE_2"/>
    <property type="match status" value="1"/>
</dbReference>
<dbReference type="PROSITE" id="PS00548">
    <property type="entry name" value="RIBOSOMAL_S3"/>
    <property type="match status" value="1"/>
</dbReference>
<sequence>MGQKINPISNRLGIIRGWDSNWCGGDNYGDILYEDSKIRKYLNTRLAKASVSRIVIERTLKLVTVVVCTARPGVIIGKGGQEVDKLKEELKRITSKEVQINIFEIKKPELDAAIVASNIARQLEAKIAYRHVIKVAIAAAMRMGAEGIKVQISGRLNGVEIARSEMYKEGRIPLHTLRANIDYALSEALTKVGLLGVKVWICRGEVYSKQDFVVQFASQRGMNRYEGSGDKSVKRRKRNGIKKNE</sequence>